<comment type="function">
    <text evidence="1">Cleaves peptides in various proteins in a process that requires ATP hydrolysis. Has a chymotrypsin-like activity. Plays a major role in the degradation of misfolded proteins.</text>
</comment>
<comment type="catalytic activity">
    <reaction evidence="1">
        <text>Hydrolysis of proteins to small peptides in the presence of ATP and magnesium. alpha-casein is the usual test substrate. In the absence of ATP, only oligopeptides shorter than five residues are hydrolyzed (such as succinyl-Leu-Tyr-|-NHMec, and Leu-Tyr-Leu-|-Tyr-Trp, in which cleavage of the -Tyr-|-Leu- and -Tyr-|-Trp bonds also occurs).</text>
        <dbReference type="EC" id="3.4.21.92"/>
    </reaction>
</comment>
<comment type="subunit">
    <text evidence="1">Fourteen ClpP subunits assemble into 2 heptameric rings which stack back to back to give a disk-like structure with a central cavity, resembling the structure of eukaryotic proteasomes.</text>
</comment>
<comment type="subcellular location">
    <subcellularLocation>
        <location evidence="1">Cytoplasm</location>
    </subcellularLocation>
</comment>
<comment type="similarity">
    <text evidence="1">Belongs to the peptidase S14 family.</text>
</comment>
<feature type="chain" id="PRO_0000252839" description="ATP-dependent Clp protease proteolytic subunit 2">
    <location>
        <begin position="1"/>
        <end position="195"/>
    </location>
</feature>
<feature type="active site" description="Nucleophile" evidence="1">
    <location>
        <position position="92"/>
    </location>
</feature>
<feature type="active site" evidence="1">
    <location>
        <position position="117"/>
    </location>
</feature>
<evidence type="ECO:0000255" key="1">
    <source>
        <dbReference type="HAMAP-Rule" id="MF_00444"/>
    </source>
</evidence>
<reference key="1">
    <citation type="journal article" date="2006" name="Proc. Natl. Acad. Sci. U.S.A.">
        <title>The complete genome of Rhodococcus sp. RHA1 provides insights into a catabolic powerhouse.</title>
        <authorList>
            <person name="McLeod M.P."/>
            <person name="Warren R.L."/>
            <person name="Hsiao W.W.L."/>
            <person name="Araki N."/>
            <person name="Myhre M."/>
            <person name="Fernandes C."/>
            <person name="Miyazawa D."/>
            <person name="Wong W."/>
            <person name="Lillquist A.L."/>
            <person name="Wang D."/>
            <person name="Dosanjh M."/>
            <person name="Hara H."/>
            <person name="Petrescu A."/>
            <person name="Morin R.D."/>
            <person name="Yang G."/>
            <person name="Stott J.M."/>
            <person name="Schein J.E."/>
            <person name="Shin H."/>
            <person name="Smailus D."/>
            <person name="Siddiqui A.S."/>
            <person name="Marra M.A."/>
            <person name="Jones S.J.M."/>
            <person name="Holt R."/>
            <person name="Brinkman F.S.L."/>
            <person name="Miyauchi K."/>
            <person name="Fukuda M."/>
            <person name="Davies J.E."/>
            <person name="Mohn W.W."/>
            <person name="Eltis L.D."/>
        </authorList>
    </citation>
    <scope>NUCLEOTIDE SEQUENCE [LARGE SCALE GENOMIC DNA]</scope>
    <source>
        <strain>RHA1</strain>
    </source>
</reference>
<organism>
    <name type="scientific">Rhodococcus jostii (strain RHA1)</name>
    <dbReference type="NCBI Taxonomy" id="101510"/>
    <lineage>
        <taxon>Bacteria</taxon>
        <taxon>Bacillati</taxon>
        <taxon>Actinomycetota</taxon>
        <taxon>Actinomycetes</taxon>
        <taxon>Mycobacteriales</taxon>
        <taxon>Nocardiaceae</taxon>
        <taxon>Rhodococcus</taxon>
    </lineage>
</organism>
<name>CLPP2_RHOJR</name>
<accession>Q0SGZ0</accession>
<gene>
    <name evidence="1" type="primary">clpP2</name>
    <name type="ordered locus">RHA1_ro01372</name>
</gene>
<dbReference type="EC" id="3.4.21.92" evidence="1"/>
<dbReference type="EMBL" id="CP000431">
    <property type="protein sequence ID" value="ABG93196.1"/>
    <property type="molecule type" value="Genomic_DNA"/>
</dbReference>
<dbReference type="RefSeq" id="WP_011594411.1">
    <property type="nucleotide sequence ID" value="NC_008268.1"/>
</dbReference>
<dbReference type="SMR" id="Q0SGZ0"/>
<dbReference type="MEROPS" id="S14.008"/>
<dbReference type="KEGG" id="rha:RHA1_ro01372"/>
<dbReference type="PATRIC" id="fig|101510.16.peg.1399"/>
<dbReference type="eggNOG" id="COG0740">
    <property type="taxonomic scope" value="Bacteria"/>
</dbReference>
<dbReference type="HOGENOM" id="CLU_058707_3_2_11"/>
<dbReference type="OrthoDB" id="9802800at2"/>
<dbReference type="Proteomes" id="UP000008710">
    <property type="component" value="Chromosome"/>
</dbReference>
<dbReference type="GO" id="GO:0005737">
    <property type="term" value="C:cytoplasm"/>
    <property type="evidence" value="ECO:0007669"/>
    <property type="project" value="UniProtKB-SubCell"/>
</dbReference>
<dbReference type="GO" id="GO:0009368">
    <property type="term" value="C:endopeptidase Clp complex"/>
    <property type="evidence" value="ECO:0007669"/>
    <property type="project" value="TreeGrafter"/>
</dbReference>
<dbReference type="GO" id="GO:0004176">
    <property type="term" value="F:ATP-dependent peptidase activity"/>
    <property type="evidence" value="ECO:0007669"/>
    <property type="project" value="InterPro"/>
</dbReference>
<dbReference type="GO" id="GO:0051117">
    <property type="term" value="F:ATPase binding"/>
    <property type="evidence" value="ECO:0007669"/>
    <property type="project" value="TreeGrafter"/>
</dbReference>
<dbReference type="GO" id="GO:0004252">
    <property type="term" value="F:serine-type endopeptidase activity"/>
    <property type="evidence" value="ECO:0007669"/>
    <property type="project" value="UniProtKB-UniRule"/>
</dbReference>
<dbReference type="GO" id="GO:0006515">
    <property type="term" value="P:protein quality control for misfolded or incompletely synthesized proteins"/>
    <property type="evidence" value="ECO:0007669"/>
    <property type="project" value="TreeGrafter"/>
</dbReference>
<dbReference type="CDD" id="cd07017">
    <property type="entry name" value="S14_ClpP_2"/>
    <property type="match status" value="1"/>
</dbReference>
<dbReference type="FunFam" id="3.90.226.10:FF:000002">
    <property type="entry name" value="ATP-dependent Clp protease proteolytic subunit"/>
    <property type="match status" value="1"/>
</dbReference>
<dbReference type="Gene3D" id="3.90.226.10">
    <property type="entry name" value="2-enoyl-CoA Hydratase, Chain A, domain 1"/>
    <property type="match status" value="1"/>
</dbReference>
<dbReference type="HAMAP" id="MF_00444">
    <property type="entry name" value="ClpP"/>
    <property type="match status" value="1"/>
</dbReference>
<dbReference type="InterPro" id="IPR001907">
    <property type="entry name" value="ClpP"/>
</dbReference>
<dbReference type="InterPro" id="IPR029045">
    <property type="entry name" value="ClpP/crotonase-like_dom_sf"/>
</dbReference>
<dbReference type="InterPro" id="IPR023562">
    <property type="entry name" value="ClpP/TepA"/>
</dbReference>
<dbReference type="InterPro" id="IPR033135">
    <property type="entry name" value="ClpP_His_AS"/>
</dbReference>
<dbReference type="NCBIfam" id="NF001368">
    <property type="entry name" value="PRK00277.1"/>
    <property type="match status" value="1"/>
</dbReference>
<dbReference type="NCBIfam" id="NF009205">
    <property type="entry name" value="PRK12553.1"/>
    <property type="match status" value="1"/>
</dbReference>
<dbReference type="PANTHER" id="PTHR10381">
    <property type="entry name" value="ATP-DEPENDENT CLP PROTEASE PROTEOLYTIC SUBUNIT"/>
    <property type="match status" value="1"/>
</dbReference>
<dbReference type="PANTHER" id="PTHR10381:SF70">
    <property type="entry name" value="ATP-DEPENDENT CLP PROTEASE PROTEOLYTIC SUBUNIT"/>
    <property type="match status" value="1"/>
</dbReference>
<dbReference type="Pfam" id="PF00574">
    <property type="entry name" value="CLP_protease"/>
    <property type="match status" value="1"/>
</dbReference>
<dbReference type="PRINTS" id="PR00127">
    <property type="entry name" value="CLPPROTEASEP"/>
</dbReference>
<dbReference type="SUPFAM" id="SSF52096">
    <property type="entry name" value="ClpP/crotonase"/>
    <property type="match status" value="1"/>
</dbReference>
<dbReference type="PROSITE" id="PS00382">
    <property type="entry name" value="CLP_PROTEASE_HIS"/>
    <property type="match status" value="1"/>
</dbReference>
<protein>
    <recommendedName>
        <fullName evidence="1">ATP-dependent Clp protease proteolytic subunit 2</fullName>
        <ecNumber evidence="1">3.4.21.92</ecNumber>
    </recommendedName>
    <alternativeName>
        <fullName evidence="1">Endopeptidase Clp 2</fullName>
    </alternativeName>
</protein>
<sequence length="195" mass="20849">MTSATAGLNLSDSVYERLLRERIIFLGTQVDDDIANKLCAQILLLSAEDPSRDISLYINSPGGSVSAGMAIFDTMQFAECDVATFGMGLAASMGQFLLSAGAKGKRYALPHARIMMHQPSAGIGGTASDIAIMAEQFAHTKREMAELIAEHTGQTVEQITADSDRDRWFTAQQALEYGFVDHVVSRAAQAGGTGQ</sequence>
<keyword id="KW-0963">Cytoplasm</keyword>
<keyword id="KW-0378">Hydrolase</keyword>
<keyword id="KW-0645">Protease</keyword>
<keyword id="KW-0720">Serine protease</keyword>
<proteinExistence type="inferred from homology"/>